<gene>
    <name type="primary">CET1</name>
    <name type="ordered locus">CAGL0E06050g</name>
</gene>
<proteinExistence type="inferred from homology"/>
<feature type="chain" id="PRO_0000210113" description="mRNA-capping enzyme subunit beta">
    <location>
        <begin position="1"/>
        <end position="602"/>
    </location>
</feature>
<feature type="region of interest" description="Disordered" evidence="3">
    <location>
        <begin position="1"/>
        <end position="249"/>
    </location>
</feature>
<feature type="compositionally biased region" description="Basic and acidic residues" evidence="3">
    <location>
        <begin position="15"/>
        <end position="42"/>
    </location>
</feature>
<feature type="compositionally biased region" description="Low complexity" evidence="3">
    <location>
        <begin position="48"/>
        <end position="64"/>
    </location>
</feature>
<feature type="compositionally biased region" description="Acidic residues" evidence="3">
    <location>
        <begin position="65"/>
        <end position="76"/>
    </location>
</feature>
<feature type="compositionally biased region" description="Basic and acidic residues" evidence="3">
    <location>
        <begin position="88"/>
        <end position="110"/>
    </location>
</feature>
<feature type="compositionally biased region" description="Low complexity" evidence="3">
    <location>
        <begin position="114"/>
        <end position="128"/>
    </location>
</feature>
<feature type="compositionally biased region" description="Basic and acidic residues" evidence="3">
    <location>
        <begin position="141"/>
        <end position="169"/>
    </location>
</feature>
<feature type="compositionally biased region" description="Polar residues" evidence="3">
    <location>
        <begin position="171"/>
        <end position="181"/>
    </location>
</feature>
<feature type="compositionally biased region" description="Basic and acidic residues" evidence="3">
    <location>
        <begin position="213"/>
        <end position="222"/>
    </location>
</feature>
<feature type="compositionally biased region" description="Basic and acidic residues" evidence="3">
    <location>
        <begin position="231"/>
        <end position="249"/>
    </location>
</feature>
<feature type="active site" description="N6-GMP-lysine intermediate" evidence="1">
    <location>
        <position position="276"/>
    </location>
</feature>
<keyword id="KW-0378">Hydrolase</keyword>
<keyword id="KW-0506">mRNA capping</keyword>
<keyword id="KW-0507">mRNA processing</keyword>
<keyword id="KW-0539">Nucleus</keyword>
<keyword id="KW-1185">Reference proteome</keyword>
<evidence type="ECO:0000250" key="1"/>
<evidence type="ECO:0000250" key="2">
    <source>
        <dbReference type="UniProtKB" id="O13297"/>
    </source>
</evidence>
<evidence type="ECO:0000256" key="3">
    <source>
        <dbReference type="SAM" id="MobiDB-lite"/>
    </source>
</evidence>
<evidence type="ECO:0000305" key="4"/>
<reference key="1">
    <citation type="journal article" date="2004" name="Nature">
        <title>Genome evolution in yeasts.</title>
        <authorList>
            <person name="Dujon B."/>
            <person name="Sherman D."/>
            <person name="Fischer G."/>
            <person name="Durrens P."/>
            <person name="Casaregola S."/>
            <person name="Lafontaine I."/>
            <person name="de Montigny J."/>
            <person name="Marck C."/>
            <person name="Neuveglise C."/>
            <person name="Talla E."/>
            <person name="Goffard N."/>
            <person name="Frangeul L."/>
            <person name="Aigle M."/>
            <person name="Anthouard V."/>
            <person name="Babour A."/>
            <person name="Barbe V."/>
            <person name="Barnay S."/>
            <person name="Blanchin S."/>
            <person name="Beckerich J.-M."/>
            <person name="Beyne E."/>
            <person name="Bleykasten C."/>
            <person name="Boisrame A."/>
            <person name="Boyer J."/>
            <person name="Cattolico L."/>
            <person name="Confanioleri F."/>
            <person name="de Daruvar A."/>
            <person name="Despons L."/>
            <person name="Fabre E."/>
            <person name="Fairhead C."/>
            <person name="Ferry-Dumazet H."/>
            <person name="Groppi A."/>
            <person name="Hantraye F."/>
            <person name="Hennequin C."/>
            <person name="Jauniaux N."/>
            <person name="Joyet P."/>
            <person name="Kachouri R."/>
            <person name="Kerrest A."/>
            <person name="Koszul R."/>
            <person name="Lemaire M."/>
            <person name="Lesur I."/>
            <person name="Ma L."/>
            <person name="Muller H."/>
            <person name="Nicaud J.-M."/>
            <person name="Nikolski M."/>
            <person name="Oztas S."/>
            <person name="Ozier-Kalogeropoulos O."/>
            <person name="Pellenz S."/>
            <person name="Potier S."/>
            <person name="Richard G.-F."/>
            <person name="Straub M.-L."/>
            <person name="Suleau A."/>
            <person name="Swennen D."/>
            <person name="Tekaia F."/>
            <person name="Wesolowski-Louvel M."/>
            <person name="Westhof E."/>
            <person name="Wirth B."/>
            <person name="Zeniou-Meyer M."/>
            <person name="Zivanovic Y."/>
            <person name="Bolotin-Fukuhara M."/>
            <person name="Thierry A."/>
            <person name="Bouchier C."/>
            <person name="Caudron B."/>
            <person name="Scarpelli C."/>
            <person name="Gaillardin C."/>
            <person name="Weissenbach J."/>
            <person name="Wincker P."/>
            <person name="Souciet J.-L."/>
        </authorList>
    </citation>
    <scope>NUCLEOTIDE SEQUENCE [LARGE SCALE GENOMIC DNA]</scope>
    <source>
        <strain>ATCC 2001 / BCRC 20586 / JCM 3761 / NBRC 0622 / NRRL Y-65 / CBS 138</strain>
    </source>
</reference>
<comment type="function">
    <text evidence="2">First step of mRNA capping. Converts the 5'-triphosphate end of a nascent mRNA chain into a diphosphate end.</text>
</comment>
<comment type="catalytic activity">
    <reaction evidence="2">
        <text>a 5'-end triphospho-ribonucleoside in mRNA + H2O = a 5'-end diphospho-ribonucleoside in mRNA + phosphate + H(+)</text>
        <dbReference type="Rhea" id="RHEA:67004"/>
        <dbReference type="Rhea" id="RHEA-COMP:17164"/>
        <dbReference type="Rhea" id="RHEA-COMP:17165"/>
        <dbReference type="ChEBI" id="CHEBI:15377"/>
        <dbReference type="ChEBI" id="CHEBI:15378"/>
        <dbReference type="ChEBI" id="CHEBI:43474"/>
        <dbReference type="ChEBI" id="CHEBI:167616"/>
        <dbReference type="ChEBI" id="CHEBI:167618"/>
        <dbReference type="EC" id="3.6.1.74"/>
    </reaction>
    <physiologicalReaction direction="left-to-right" evidence="2">
        <dbReference type="Rhea" id="RHEA:67005"/>
    </physiologicalReaction>
</comment>
<comment type="cofactor">
    <cofactor evidence="2">
        <name>Mg(2+)</name>
        <dbReference type="ChEBI" id="CHEBI:18420"/>
    </cofactor>
</comment>
<comment type="subunit">
    <text evidence="2">Heterodimer. The mRNA-capping enzyme is composed of two separate chains alpha and beta, respectively a mRNA guanylyltransferase and an mRNA 5'-triphosphate monophosphatase.</text>
</comment>
<comment type="subcellular location">
    <subcellularLocation>
        <location evidence="1">Nucleus</location>
    </subcellularLocation>
</comment>
<comment type="similarity">
    <text evidence="4">Belongs to the fungal TPase family.</text>
</comment>
<protein>
    <recommendedName>
        <fullName>mRNA-capping enzyme subunit beta</fullName>
        <ecNumber evidence="2">3.6.1.74</ecNumber>
    </recommendedName>
    <alternativeName>
        <fullName>mRNA 5'-phosphatase</fullName>
    </alternativeName>
    <alternativeName>
        <fullName>mRNA 5'-triphosphate monophosphatase</fullName>
    </alternativeName>
</protein>
<dbReference type="EC" id="3.6.1.74" evidence="2"/>
<dbReference type="EMBL" id="CR380951">
    <property type="protein sequence ID" value="CAG58871.1"/>
    <property type="molecule type" value="Genomic_DNA"/>
</dbReference>
<dbReference type="RefSeq" id="XP_445952.1">
    <property type="nucleotide sequence ID" value="XM_445952.1"/>
</dbReference>
<dbReference type="SMR" id="Q6FUZ2"/>
<dbReference type="FunCoup" id="Q6FUZ2">
    <property type="interactions" value="86"/>
</dbReference>
<dbReference type="STRING" id="284593.Q6FUZ2"/>
<dbReference type="EnsemblFungi" id="CAGL0E06050g-T">
    <property type="protein sequence ID" value="CAGL0E06050g-T-p1"/>
    <property type="gene ID" value="CAGL0E06050g"/>
</dbReference>
<dbReference type="KEGG" id="cgr:2887417"/>
<dbReference type="CGD" id="CAL0128976">
    <property type="gene designation" value="CAGL0E06050g"/>
</dbReference>
<dbReference type="VEuPathDB" id="FungiDB:CAGL0E06050g"/>
<dbReference type="eggNOG" id="ENOG502RZAX">
    <property type="taxonomic scope" value="Eukaryota"/>
</dbReference>
<dbReference type="HOGENOM" id="CLU_037653_0_0_1"/>
<dbReference type="InParanoid" id="Q6FUZ2"/>
<dbReference type="OMA" id="FHESTAT"/>
<dbReference type="Proteomes" id="UP000002428">
    <property type="component" value="Chromosome E"/>
</dbReference>
<dbReference type="GO" id="GO:0031533">
    <property type="term" value="C:mRNA capping enzyme complex"/>
    <property type="evidence" value="ECO:0007669"/>
    <property type="project" value="EnsemblFungi"/>
</dbReference>
<dbReference type="GO" id="GO:0140818">
    <property type="term" value="F:mRNA 5'-triphosphate monophosphatase activity"/>
    <property type="evidence" value="ECO:0007669"/>
    <property type="project" value="RHEA"/>
</dbReference>
<dbReference type="GO" id="GO:0004651">
    <property type="term" value="F:polynucleotide 5'-phosphatase activity"/>
    <property type="evidence" value="ECO:0007669"/>
    <property type="project" value="UniProtKB-EC"/>
</dbReference>
<dbReference type="GO" id="GO:0006370">
    <property type="term" value="P:7-methylguanosine mRNA capping"/>
    <property type="evidence" value="ECO:0007669"/>
    <property type="project" value="UniProtKB-KW"/>
</dbReference>
<dbReference type="GO" id="GO:1900182">
    <property type="term" value="P:positive regulation of protein localization to nucleus"/>
    <property type="evidence" value="ECO:0007669"/>
    <property type="project" value="EnsemblFungi"/>
</dbReference>
<dbReference type="GO" id="GO:0032968">
    <property type="term" value="P:positive regulation of transcription elongation by RNA polymerase II"/>
    <property type="evidence" value="ECO:0007669"/>
    <property type="project" value="EnsemblFungi"/>
</dbReference>
<dbReference type="CDD" id="cd07470">
    <property type="entry name" value="CYTH-like_mRNA_RTPase"/>
    <property type="match status" value="1"/>
</dbReference>
<dbReference type="Gene3D" id="3.20.100.10">
    <property type="entry name" value="mRNA triphosphatase Cet1-like"/>
    <property type="match status" value="1"/>
</dbReference>
<dbReference type="InterPro" id="IPR040343">
    <property type="entry name" value="Cet1/Ctl1"/>
</dbReference>
<dbReference type="InterPro" id="IPR033469">
    <property type="entry name" value="CYTH-like_dom_sf"/>
</dbReference>
<dbReference type="InterPro" id="IPR004206">
    <property type="entry name" value="mRNA_triPase_Cet1"/>
</dbReference>
<dbReference type="InterPro" id="IPR037009">
    <property type="entry name" value="mRNA_triPase_Cet1_sf"/>
</dbReference>
<dbReference type="PANTHER" id="PTHR28118:SF1">
    <property type="entry name" value="POLYNUCLEOTIDE 5'-TRIPHOSPHATASE CTL1-RELATED"/>
    <property type="match status" value="1"/>
</dbReference>
<dbReference type="PANTHER" id="PTHR28118">
    <property type="entry name" value="POLYNUCLEOTIDE 5'-TRIPHOSPHATASE-RELATED"/>
    <property type="match status" value="1"/>
</dbReference>
<dbReference type="Pfam" id="PF02940">
    <property type="entry name" value="mRNA_triPase"/>
    <property type="match status" value="1"/>
</dbReference>
<dbReference type="SUPFAM" id="SSF55154">
    <property type="entry name" value="CYTH-like phosphatases"/>
    <property type="match status" value="1"/>
</dbReference>
<sequence length="602" mass="68350">MSEHHSKRALSLDDLVNHDENDKSKLQKLADNESSVRSDDNRPGAIENIVNGNNSNSDLNSNGVIEEDTDTDDDVGGEFTFDNGITFDYDKQDRFSPEKKRIQARKKDTSKTTPSISNESPSNSKESSVPVDPLSSNISATDRKDSSEEKPDLTGPELVKEPDTNEYKRPSIQSITNAEDTTYNDHKAAGMEKTSNKHSLPNILSDSIDETVTEEHKPKTETEQTITEYQQENKQKDNVNESNSEETHDIKNDNMNQVEKIFQEKTSTLSKKNSVKKDLELLNEISASSKPNKYKNTPIWAQKWKPTVKALQNIDTNDFKIDNSILDIIPDDDLTKSVQDWVYATLYSIDPDLRPFIELEMKFGVLLESKSPDRVNPPVSSQAVYTDMDAHLTPNVDETVFKELSKYIQSLSEITENAGKFNVIEAQTKDAVYRVGTSTQRPRFLRMSSDVKTGRIGAFIEKRHISQLLIYSPKDSYDVKLSINLELPVPENDPPEKYQHQTPVSERTKERVSYIHNDSCTRFDITKVQNHNKGIKSNDVEITHEIELEINTPALIKAFDNIMTDSKEYATLIRTFLNNGTIVRRKLSSLSYEIFEGQKKIQ</sequence>
<accession>Q6FUZ2</accession>
<name>CET1_CANGA</name>
<organism>
    <name type="scientific">Candida glabrata (strain ATCC 2001 / BCRC 20586 / JCM 3761 / NBRC 0622 / NRRL Y-65 / CBS 138)</name>
    <name type="common">Yeast</name>
    <name type="synonym">Nakaseomyces glabratus</name>
    <dbReference type="NCBI Taxonomy" id="284593"/>
    <lineage>
        <taxon>Eukaryota</taxon>
        <taxon>Fungi</taxon>
        <taxon>Dikarya</taxon>
        <taxon>Ascomycota</taxon>
        <taxon>Saccharomycotina</taxon>
        <taxon>Saccharomycetes</taxon>
        <taxon>Saccharomycetales</taxon>
        <taxon>Saccharomycetaceae</taxon>
        <taxon>Nakaseomyces</taxon>
    </lineage>
</organism>